<sequence length="178" mass="20703">MKKNIHILGASGVGTSTLGAALSKRLPHTHLDTDNYYWLDKFTKKREIPERRKLLEKDLTINEKWILSGAVCGWGDNLKSYFDLVVFLWIPQDIRLERLRHREFQRYGNEVLAGGSKYEQSKTFLEWASLYDNAGMEVRSRALHEHWMADLSCPVLKIEDDCSVNERVDRVLDYLSSN</sequence>
<feature type="signal peptide" evidence="1">
    <location>
        <begin position="1"/>
        <end position="19"/>
    </location>
</feature>
<feature type="chain" id="PRO_0000013727" description="Uncharacterized protein YqaC">
    <location>
        <begin position="20"/>
        <end position="178"/>
    </location>
</feature>
<keyword id="KW-1185">Reference proteome</keyword>
<keyword id="KW-0732">Signal</keyword>
<protein>
    <recommendedName>
        <fullName>Uncharacterized protein YqaC</fullName>
    </recommendedName>
</protein>
<organism>
    <name type="scientific">Bacillus subtilis (strain 168)</name>
    <dbReference type="NCBI Taxonomy" id="224308"/>
    <lineage>
        <taxon>Bacteria</taxon>
        <taxon>Bacillati</taxon>
        <taxon>Bacillota</taxon>
        <taxon>Bacilli</taxon>
        <taxon>Bacillales</taxon>
        <taxon>Bacillaceae</taxon>
        <taxon>Bacillus</taxon>
    </lineage>
</organism>
<name>YQAC_BACSU</name>
<proteinExistence type="inferred from homology"/>
<gene>
    <name type="primary">yqaC</name>
    <name type="ordered locus">BSU26370</name>
</gene>
<accession>P45900</accession>
<evidence type="ECO:0000255" key="1"/>
<reference key="1">
    <citation type="journal article" date="1995" name="Microbiology">
        <title>Complete nucleotide sequence of a skin element excised by DNA rearrangement during sporulation in Bacillus subtilis.</title>
        <authorList>
            <person name="Takemaru K."/>
            <person name="Mizuno M."/>
            <person name="Sato T."/>
            <person name="Takeuchi M."/>
            <person name="Kobayashi Y."/>
        </authorList>
    </citation>
    <scope>NUCLEOTIDE SEQUENCE [GENOMIC DNA]</scope>
    <source>
        <strain>168 / JH642</strain>
    </source>
</reference>
<reference key="2">
    <citation type="journal article" date="1996" name="Microbiology">
        <title>Systematic sequencing of the 283 kb 210 degrees-232 degrees region of the Bacillus subtilis genome containing the skin element and many sporulation genes.</title>
        <authorList>
            <person name="Mizuno M."/>
            <person name="Masuda S."/>
            <person name="Takemaru K."/>
            <person name="Hosono S."/>
            <person name="Sato T."/>
            <person name="Takeuchi M."/>
            <person name="Kobayashi Y."/>
        </authorList>
    </citation>
    <scope>NUCLEOTIDE SEQUENCE [GENOMIC DNA]</scope>
    <source>
        <strain>168 / JH642</strain>
    </source>
</reference>
<reference key="3">
    <citation type="journal article" date="1997" name="Nature">
        <title>The complete genome sequence of the Gram-positive bacterium Bacillus subtilis.</title>
        <authorList>
            <person name="Kunst F."/>
            <person name="Ogasawara N."/>
            <person name="Moszer I."/>
            <person name="Albertini A.M."/>
            <person name="Alloni G."/>
            <person name="Azevedo V."/>
            <person name="Bertero M.G."/>
            <person name="Bessieres P."/>
            <person name="Bolotin A."/>
            <person name="Borchert S."/>
            <person name="Borriss R."/>
            <person name="Boursier L."/>
            <person name="Brans A."/>
            <person name="Braun M."/>
            <person name="Brignell S.C."/>
            <person name="Bron S."/>
            <person name="Brouillet S."/>
            <person name="Bruschi C.V."/>
            <person name="Caldwell B."/>
            <person name="Capuano V."/>
            <person name="Carter N.M."/>
            <person name="Choi S.-K."/>
            <person name="Codani J.-J."/>
            <person name="Connerton I.F."/>
            <person name="Cummings N.J."/>
            <person name="Daniel R.A."/>
            <person name="Denizot F."/>
            <person name="Devine K.M."/>
            <person name="Duesterhoeft A."/>
            <person name="Ehrlich S.D."/>
            <person name="Emmerson P.T."/>
            <person name="Entian K.-D."/>
            <person name="Errington J."/>
            <person name="Fabret C."/>
            <person name="Ferrari E."/>
            <person name="Foulger D."/>
            <person name="Fritz C."/>
            <person name="Fujita M."/>
            <person name="Fujita Y."/>
            <person name="Fuma S."/>
            <person name="Galizzi A."/>
            <person name="Galleron N."/>
            <person name="Ghim S.-Y."/>
            <person name="Glaser P."/>
            <person name="Goffeau A."/>
            <person name="Golightly E.J."/>
            <person name="Grandi G."/>
            <person name="Guiseppi G."/>
            <person name="Guy B.J."/>
            <person name="Haga K."/>
            <person name="Haiech J."/>
            <person name="Harwood C.R."/>
            <person name="Henaut A."/>
            <person name="Hilbert H."/>
            <person name="Holsappel S."/>
            <person name="Hosono S."/>
            <person name="Hullo M.-F."/>
            <person name="Itaya M."/>
            <person name="Jones L.-M."/>
            <person name="Joris B."/>
            <person name="Karamata D."/>
            <person name="Kasahara Y."/>
            <person name="Klaerr-Blanchard M."/>
            <person name="Klein C."/>
            <person name="Kobayashi Y."/>
            <person name="Koetter P."/>
            <person name="Koningstein G."/>
            <person name="Krogh S."/>
            <person name="Kumano M."/>
            <person name="Kurita K."/>
            <person name="Lapidus A."/>
            <person name="Lardinois S."/>
            <person name="Lauber J."/>
            <person name="Lazarevic V."/>
            <person name="Lee S.-M."/>
            <person name="Levine A."/>
            <person name="Liu H."/>
            <person name="Masuda S."/>
            <person name="Mauel C."/>
            <person name="Medigue C."/>
            <person name="Medina N."/>
            <person name="Mellado R.P."/>
            <person name="Mizuno M."/>
            <person name="Moestl D."/>
            <person name="Nakai S."/>
            <person name="Noback M."/>
            <person name="Noone D."/>
            <person name="O'Reilly M."/>
            <person name="Ogawa K."/>
            <person name="Ogiwara A."/>
            <person name="Oudega B."/>
            <person name="Park S.-H."/>
            <person name="Parro V."/>
            <person name="Pohl T.M."/>
            <person name="Portetelle D."/>
            <person name="Porwollik S."/>
            <person name="Prescott A.M."/>
            <person name="Presecan E."/>
            <person name="Pujic P."/>
            <person name="Purnelle B."/>
            <person name="Rapoport G."/>
            <person name="Rey M."/>
            <person name="Reynolds S."/>
            <person name="Rieger M."/>
            <person name="Rivolta C."/>
            <person name="Rocha E."/>
            <person name="Roche B."/>
            <person name="Rose M."/>
            <person name="Sadaie Y."/>
            <person name="Sato T."/>
            <person name="Scanlan E."/>
            <person name="Schleich S."/>
            <person name="Schroeter R."/>
            <person name="Scoffone F."/>
            <person name="Sekiguchi J."/>
            <person name="Sekowska A."/>
            <person name="Seror S.J."/>
            <person name="Serror P."/>
            <person name="Shin B.-S."/>
            <person name="Soldo B."/>
            <person name="Sorokin A."/>
            <person name="Tacconi E."/>
            <person name="Takagi T."/>
            <person name="Takahashi H."/>
            <person name="Takemaru K."/>
            <person name="Takeuchi M."/>
            <person name="Tamakoshi A."/>
            <person name="Tanaka T."/>
            <person name="Terpstra P."/>
            <person name="Tognoni A."/>
            <person name="Tosato V."/>
            <person name="Uchiyama S."/>
            <person name="Vandenbol M."/>
            <person name="Vannier F."/>
            <person name="Vassarotti A."/>
            <person name="Viari A."/>
            <person name="Wambutt R."/>
            <person name="Wedler E."/>
            <person name="Wedler H."/>
            <person name="Weitzenegger T."/>
            <person name="Winters P."/>
            <person name="Wipat A."/>
            <person name="Yamamoto H."/>
            <person name="Yamane K."/>
            <person name="Yasumoto K."/>
            <person name="Yata K."/>
            <person name="Yoshida K."/>
            <person name="Yoshikawa H.-F."/>
            <person name="Zumstein E."/>
            <person name="Yoshikawa H."/>
            <person name="Danchin A."/>
        </authorList>
    </citation>
    <scope>NUCLEOTIDE SEQUENCE [LARGE SCALE GENOMIC DNA]</scope>
    <source>
        <strain>168</strain>
    </source>
</reference>
<reference key="4">
    <citation type="journal article" date="1995" name="Gene">
        <title>Analysis of a Bacillus subtilis genome fragment using a co-operative computer system prototype.</title>
        <authorList>
            <person name="Medigue C."/>
            <person name="Moszer I."/>
            <person name="Viari A."/>
            <person name="Danchin A."/>
        </authorList>
    </citation>
    <scope>IDENTIFICATION</scope>
</reference>
<dbReference type="EMBL" id="D32216">
    <property type="protein sequence ID" value="BAA06916.1"/>
    <property type="molecule type" value="Genomic_DNA"/>
</dbReference>
<dbReference type="EMBL" id="D84432">
    <property type="protein sequence ID" value="BAA12377.1"/>
    <property type="molecule type" value="Genomic_DNA"/>
</dbReference>
<dbReference type="EMBL" id="AL009126">
    <property type="protein sequence ID" value="CAB14578.1"/>
    <property type="molecule type" value="Genomic_DNA"/>
</dbReference>
<dbReference type="PIR" id="B69944">
    <property type="entry name" value="B69944"/>
</dbReference>
<dbReference type="RefSeq" id="NP_390514.1">
    <property type="nucleotide sequence ID" value="NC_000964.3"/>
</dbReference>
<dbReference type="RefSeq" id="WP_004399117.1">
    <property type="nucleotide sequence ID" value="NZ_OZ025638.1"/>
</dbReference>
<dbReference type="SMR" id="P45900"/>
<dbReference type="FunCoup" id="P45900">
    <property type="interactions" value="12"/>
</dbReference>
<dbReference type="STRING" id="224308.BSU26370"/>
<dbReference type="PaxDb" id="224308-BSU26370"/>
<dbReference type="EnsemblBacteria" id="CAB14578">
    <property type="protein sequence ID" value="CAB14578"/>
    <property type="gene ID" value="BSU_26370"/>
</dbReference>
<dbReference type="GeneID" id="937669"/>
<dbReference type="KEGG" id="bsu:BSU26370"/>
<dbReference type="PATRIC" id="fig|224308.179.peg.2865"/>
<dbReference type="eggNOG" id="COG0563">
    <property type="taxonomic scope" value="Bacteria"/>
</dbReference>
<dbReference type="InParanoid" id="P45900"/>
<dbReference type="OrthoDB" id="9800332at2"/>
<dbReference type="PhylomeDB" id="P45900"/>
<dbReference type="BioCyc" id="BSUB:BSU26370-MONOMER"/>
<dbReference type="Proteomes" id="UP000001570">
    <property type="component" value="Chromosome"/>
</dbReference>
<dbReference type="Gene3D" id="3.40.50.300">
    <property type="entry name" value="P-loop containing nucleotide triphosphate hydrolases"/>
    <property type="match status" value="1"/>
</dbReference>
<dbReference type="InterPro" id="IPR052922">
    <property type="entry name" value="Cytidylate_Kinase-2"/>
</dbReference>
<dbReference type="InterPro" id="IPR027417">
    <property type="entry name" value="P-loop_NTPase"/>
</dbReference>
<dbReference type="NCBIfam" id="NF004861">
    <property type="entry name" value="PRK06217.1"/>
    <property type="match status" value="1"/>
</dbReference>
<dbReference type="PANTHER" id="PTHR37816:SF2">
    <property type="entry name" value="DNA TOPOLOGY MODULATION PROTEIN FLAR-RELATED PROTEIN"/>
    <property type="match status" value="1"/>
</dbReference>
<dbReference type="PANTHER" id="PTHR37816">
    <property type="entry name" value="YALI0E33011P"/>
    <property type="match status" value="1"/>
</dbReference>
<dbReference type="Pfam" id="PF13238">
    <property type="entry name" value="AAA_18"/>
    <property type="match status" value="1"/>
</dbReference>
<dbReference type="SUPFAM" id="SSF52540">
    <property type="entry name" value="P-loop containing nucleoside triphosphate hydrolases"/>
    <property type="match status" value="1"/>
</dbReference>